<protein>
    <recommendedName>
        <fullName evidence="1">Hydroxylamine reductase</fullName>
        <ecNumber evidence="1">1.7.99.1</ecNumber>
    </recommendedName>
    <alternativeName>
        <fullName evidence="1">Hybrid-cluster protein</fullName>
        <shortName evidence="1">HCP</shortName>
    </alternativeName>
    <alternativeName>
        <fullName evidence="1">Prismane protein</fullName>
    </alternativeName>
</protein>
<sequence>MSMFCFQCQETAKGTGCILSGVCGKTPEVANMQDLLLFVVRGIAVYNQALRKDGRSSARADKFIFDALFTTITNANFDKHSIIEKIKKGLELKKDLSNQVTIEHAPDECTWYGDETEFEEKAQTVGVLRTSDEDIRSLKELVHYGIKGMAAYVEHAYNLGYENPEIFAFMQYALAELTREDITVDELITLTLATGNHGVQAMAQLDTANTSHYGNPEISEVNIGVRNNPGILVSGHDLKDIEELLQQTEGTGIDIYTHSEMLPAHYYPQLKKYKHLAGNYGNAWWKQKEEFESFNGPILFTTNCIVPPRPNATYKDRIYTTGATGLEGATYIPERKDGKQKDFSVIIEHARRCQPPVAIESGKIVGGFAHAQVIALADKVVEAVKSGAIRKFFVMAGCDGRMKSRSYYTEFAEKLPADTVILTAGCAKYRYNKLPLGDINGIPRVLDAGQCNDSYSLAIIAMKLQEVFGLKDINDLPIVYNIAWYEQKAVIVLLALLALGVKKIHLGPTLPAFLSPNVKQVLIDNFGIGGISTADEDIAKFLA</sequence>
<proteinExistence type="inferred from homology"/>
<comment type="function">
    <text evidence="1">Catalyzes the reduction of hydroxylamine to form NH(3) and H(2)O.</text>
</comment>
<comment type="catalytic activity">
    <reaction evidence="1">
        <text>A + NH4(+) + H2O = hydroxylamine + AH2 + H(+)</text>
        <dbReference type="Rhea" id="RHEA:22052"/>
        <dbReference type="ChEBI" id="CHEBI:13193"/>
        <dbReference type="ChEBI" id="CHEBI:15377"/>
        <dbReference type="ChEBI" id="CHEBI:15378"/>
        <dbReference type="ChEBI" id="CHEBI:15429"/>
        <dbReference type="ChEBI" id="CHEBI:17499"/>
        <dbReference type="ChEBI" id="CHEBI:28938"/>
        <dbReference type="EC" id="1.7.99.1"/>
    </reaction>
</comment>
<comment type="cofactor">
    <cofactor evidence="1">
        <name>[4Fe-4S] cluster</name>
        <dbReference type="ChEBI" id="CHEBI:49883"/>
    </cofactor>
    <text evidence="1">Binds 1 [4Fe-4S] cluster.</text>
</comment>
<comment type="cofactor">
    <cofactor evidence="1">
        <name>hybrid [4Fe-2O-2S] cluster</name>
        <dbReference type="ChEBI" id="CHEBI:60519"/>
    </cofactor>
    <text evidence="1">Binds 1 hybrid [4Fe-2O-2S] cluster.</text>
</comment>
<comment type="subcellular location">
    <subcellularLocation>
        <location evidence="1">Cytoplasm</location>
    </subcellularLocation>
</comment>
<comment type="similarity">
    <text evidence="1">Belongs to the HCP family.</text>
</comment>
<name>HCP_BACFR</name>
<evidence type="ECO:0000255" key="1">
    <source>
        <dbReference type="HAMAP-Rule" id="MF_00069"/>
    </source>
</evidence>
<gene>
    <name evidence="1" type="primary">hcp</name>
    <name type="ordered locus">BF2147</name>
</gene>
<accession>Q64UD5</accession>
<feature type="chain" id="PRO_1000009144" description="Hydroxylamine reductase">
    <location>
        <begin position="1"/>
        <end position="543"/>
    </location>
</feature>
<feature type="binding site" evidence="1">
    <location>
        <position position="5"/>
    </location>
    <ligand>
        <name>[4Fe-4S] cluster</name>
        <dbReference type="ChEBI" id="CHEBI:49883"/>
    </ligand>
</feature>
<feature type="binding site" evidence="1">
    <location>
        <position position="8"/>
    </location>
    <ligand>
        <name>[4Fe-4S] cluster</name>
        <dbReference type="ChEBI" id="CHEBI:49883"/>
    </ligand>
</feature>
<feature type="binding site" evidence="1">
    <location>
        <position position="17"/>
    </location>
    <ligand>
        <name>[4Fe-4S] cluster</name>
        <dbReference type="ChEBI" id="CHEBI:49883"/>
    </ligand>
</feature>
<feature type="binding site" evidence="1">
    <location>
        <position position="23"/>
    </location>
    <ligand>
        <name>[4Fe-4S] cluster</name>
        <dbReference type="ChEBI" id="CHEBI:49883"/>
    </ligand>
</feature>
<feature type="binding site" evidence="1">
    <location>
        <position position="236"/>
    </location>
    <ligand>
        <name>hybrid [4Fe-2O-2S] cluster</name>
        <dbReference type="ChEBI" id="CHEBI:60519"/>
    </ligand>
</feature>
<feature type="binding site" evidence="1">
    <location>
        <position position="260"/>
    </location>
    <ligand>
        <name>hybrid [4Fe-2O-2S] cluster</name>
        <dbReference type="ChEBI" id="CHEBI:60519"/>
    </ligand>
</feature>
<feature type="binding site" evidence="1">
    <location>
        <position position="304"/>
    </location>
    <ligand>
        <name>hybrid [4Fe-2O-2S] cluster</name>
        <dbReference type="ChEBI" id="CHEBI:60519"/>
    </ligand>
</feature>
<feature type="binding site" description="via persulfide group" evidence="1">
    <location>
        <position position="398"/>
    </location>
    <ligand>
        <name>hybrid [4Fe-2O-2S] cluster</name>
        <dbReference type="ChEBI" id="CHEBI:60519"/>
    </ligand>
</feature>
<feature type="binding site" evidence="1">
    <location>
        <position position="426"/>
    </location>
    <ligand>
        <name>hybrid [4Fe-2O-2S] cluster</name>
        <dbReference type="ChEBI" id="CHEBI:60519"/>
    </ligand>
</feature>
<feature type="binding site" evidence="1">
    <location>
        <position position="451"/>
    </location>
    <ligand>
        <name>hybrid [4Fe-2O-2S] cluster</name>
        <dbReference type="ChEBI" id="CHEBI:60519"/>
    </ligand>
</feature>
<feature type="binding site" evidence="1">
    <location>
        <position position="486"/>
    </location>
    <ligand>
        <name>hybrid [4Fe-2O-2S] cluster</name>
        <dbReference type="ChEBI" id="CHEBI:60519"/>
    </ligand>
</feature>
<feature type="binding site" evidence="1">
    <location>
        <position position="488"/>
    </location>
    <ligand>
        <name>hybrid [4Fe-2O-2S] cluster</name>
        <dbReference type="ChEBI" id="CHEBI:60519"/>
    </ligand>
</feature>
<feature type="modified residue" description="Cysteine persulfide" evidence="1">
    <location>
        <position position="398"/>
    </location>
</feature>
<organism>
    <name type="scientific">Bacteroides fragilis (strain YCH46)</name>
    <dbReference type="NCBI Taxonomy" id="295405"/>
    <lineage>
        <taxon>Bacteria</taxon>
        <taxon>Pseudomonadati</taxon>
        <taxon>Bacteroidota</taxon>
        <taxon>Bacteroidia</taxon>
        <taxon>Bacteroidales</taxon>
        <taxon>Bacteroidaceae</taxon>
        <taxon>Bacteroides</taxon>
    </lineage>
</organism>
<reference key="1">
    <citation type="journal article" date="2004" name="Proc. Natl. Acad. Sci. U.S.A.">
        <title>Genomic analysis of Bacteroides fragilis reveals extensive DNA inversions regulating cell surface adaptation.</title>
        <authorList>
            <person name="Kuwahara T."/>
            <person name="Yamashita A."/>
            <person name="Hirakawa H."/>
            <person name="Nakayama H."/>
            <person name="Toh H."/>
            <person name="Okada N."/>
            <person name="Kuhara S."/>
            <person name="Hattori M."/>
            <person name="Hayashi T."/>
            <person name="Ohnishi Y."/>
        </authorList>
    </citation>
    <scope>NUCLEOTIDE SEQUENCE [LARGE SCALE GENOMIC DNA]</scope>
    <source>
        <strain>YCH46</strain>
    </source>
</reference>
<dbReference type="EC" id="1.7.99.1" evidence="1"/>
<dbReference type="EMBL" id="AP006841">
    <property type="protein sequence ID" value="BAD48894.1"/>
    <property type="molecule type" value="Genomic_DNA"/>
</dbReference>
<dbReference type="RefSeq" id="WP_023062937.1">
    <property type="nucleotide sequence ID" value="NC_006347.1"/>
</dbReference>
<dbReference type="RefSeq" id="YP_099428.3">
    <property type="nucleotide sequence ID" value="NC_006347.1"/>
</dbReference>
<dbReference type="SMR" id="Q64UD5"/>
<dbReference type="STRING" id="295405.BF2147"/>
<dbReference type="KEGG" id="bfr:BF2147"/>
<dbReference type="PATRIC" id="fig|295405.11.peg.2085"/>
<dbReference type="HOGENOM" id="CLU_038344_2_0_10"/>
<dbReference type="OrthoDB" id="9761526at2"/>
<dbReference type="Proteomes" id="UP000002197">
    <property type="component" value="Chromosome"/>
</dbReference>
<dbReference type="GO" id="GO:0005737">
    <property type="term" value="C:cytoplasm"/>
    <property type="evidence" value="ECO:0007669"/>
    <property type="project" value="UniProtKB-SubCell"/>
</dbReference>
<dbReference type="GO" id="GO:0051539">
    <property type="term" value="F:4 iron, 4 sulfur cluster binding"/>
    <property type="evidence" value="ECO:0007669"/>
    <property type="project" value="UniProtKB-KW"/>
</dbReference>
<dbReference type="GO" id="GO:0050418">
    <property type="term" value="F:hydroxylamine reductase activity"/>
    <property type="evidence" value="ECO:0007669"/>
    <property type="project" value="UniProtKB-UniRule"/>
</dbReference>
<dbReference type="GO" id="GO:0046872">
    <property type="term" value="F:metal ion binding"/>
    <property type="evidence" value="ECO:0007669"/>
    <property type="project" value="UniProtKB-KW"/>
</dbReference>
<dbReference type="GO" id="GO:0004601">
    <property type="term" value="F:peroxidase activity"/>
    <property type="evidence" value="ECO:0007669"/>
    <property type="project" value="TreeGrafter"/>
</dbReference>
<dbReference type="GO" id="GO:0042542">
    <property type="term" value="P:response to hydrogen peroxide"/>
    <property type="evidence" value="ECO:0007669"/>
    <property type="project" value="TreeGrafter"/>
</dbReference>
<dbReference type="CDD" id="cd01914">
    <property type="entry name" value="HCP"/>
    <property type="match status" value="1"/>
</dbReference>
<dbReference type="FunFam" id="1.20.1270.20:FF:000001">
    <property type="entry name" value="Hydroxylamine reductase"/>
    <property type="match status" value="1"/>
</dbReference>
<dbReference type="FunFam" id="3.40.50.2030:FF:000001">
    <property type="entry name" value="Hydroxylamine reductase"/>
    <property type="match status" value="1"/>
</dbReference>
<dbReference type="FunFam" id="3.40.50.2030:FF:000002">
    <property type="entry name" value="Hydroxylamine reductase"/>
    <property type="match status" value="1"/>
</dbReference>
<dbReference type="Gene3D" id="1.20.1270.20">
    <property type="match status" value="2"/>
</dbReference>
<dbReference type="Gene3D" id="3.40.50.2030">
    <property type="match status" value="2"/>
</dbReference>
<dbReference type="HAMAP" id="MF_00069">
    <property type="entry name" value="Hydroxylam_reduct"/>
    <property type="match status" value="1"/>
</dbReference>
<dbReference type="InterPro" id="IPR004137">
    <property type="entry name" value="HCP/CODH"/>
</dbReference>
<dbReference type="InterPro" id="IPR010048">
    <property type="entry name" value="Hydroxylam_reduct"/>
</dbReference>
<dbReference type="InterPro" id="IPR016099">
    <property type="entry name" value="Prismane-like_a/b-sand"/>
</dbReference>
<dbReference type="InterPro" id="IPR011254">
    <property type="entry name" value="Prismane-like_sf"/>
</dbReference>
<dbReference type="InterPro" id="IPR016100">
    <property type="entry name" value="Prismane_a-bundle"/>
</dbReference>
<dbReference type="NCBIfam" id="TIGR01703">
    <property type="entry name" value="hybrid_clust"/>
    <property type="match status" value="1"/>
</dbReference>
<dbReference type="NCBIfam" id="NF003658">
    <property type="entry name" value="PRK05290.1"/>
    <property type="match status" value="1"/>
</dbReference>
<dbReference type="PANTHER" id="PTHR30109">
    <property type="entry name" value="HYDROXYLAMINE REDUCTASE"/>
    <property type="match status" value="1"/>
</dbReference>
<dbReference type="PANTHER" id="PTHR30109:SF0">
    <property type="entry name" value="HYDROXYLAMINE REDUCTASE"/>
    <property type="match status" value="1"/>
</dbReference>
<dbReference type="Pfam" id="PF03063">
    <property type="entry name" value="Prismane"/>
    <property type="match status" value="1"/>
</dbReference>
<dbReference type="PIRSF" id="PIRSF000076">
    <property type="entry name" value="HCP"/>
    <property type="match status" value="1"/>
</dbReference>
<dbReference type="SUPFAM" id="SSF56821">
    <property type="entry name" value="Prismane protein-like"/>
    <property type="match status" value="1"/>
</dbReference>
<keyword id="KW-0004">4Fe-4S</keyword>
<keyword id="KW-0963">Cytoplasm</keyword>
<keyword id="KW-0408">Iron</keyword>
<keyword id="KW-0411">Iron-sulfur</keyword>
<keyword id="KW-0479">Metal-binding</keyword>
<keyword id="KW-0560">Oxidoreductase</keyword>